<organism>
    <name type="scientific">Malbranchea cinnamomea</name>
    <name type="common">Thermophilic fungus</name>
    <name type="synonym">Malbranchea sulfurea</name>
    <dbReference type="NCBI Taxonomy" id="5041"/>
    <lineage>
        <taxon>Eukaryota</taxon>
        <taxon>Fungi</taxon>
        <taxon>Dikarya</taxon>
        <taxon>Ascomycota</taxon>
        <taxon>Pezizomycotina</taxon>
        <taxon>Eurotiomycetes</taxon>
        <taxon>Eurotiomycetidae</taxon>
        <taxon>Onygenales</taxon>
        <taxon>Malbrancheaceae</taxon>
        <taxon>Malbranchea</taxon>
    </lineage>
</organism>
<keyword id="KW-0119">Carbohydrate metabolism</keyword>
<keyword id="KW-0136">Cellulose degradation</keyword>
<keyword id="KW-0186">Copper</keyword>
<keyword id="KW-1015">Disulfide bond</keyword>
<keyword id="KW-0479">Metal-binding</keyword>
<keyword id="KW-0503">Monooxygenase</keyword>
<keyword id="KW-0560">Oxidoreductase</keyword>
<keyword id="KW-0624">Polysaccharide degradation</keyword>
<keyword id="KW-0964">Secreted</keyword>
<keyword id="KW-0732">Signal</keyword>
<proteinExistence type="evidence at protein level"/>
<name>LP9B_MALCI</name>
<gene>
    <name evidence="6" type="primary">LPMO9B</name>
    <name evidence="6" type="synonym">AA9B</name>
</gene>
<reference key="1">
    <citation type="journal article" date="2019" name="Appl. Environ. Microbiol.">
        <title>Specific xylan activity revealed for AA9 lytic polysaccharide monooxygenases of the thermophilic fungus Malbranchea cinnamomea by functional characterization.</title>
        <authorList>
            <person name="Huettner S."/>
            <person name="Varnai A."/>
            <person name="Petrovic D.M."/>
            <person name="Bach C.X."/>
            <person name="Kim Anh D.T."/>
            <person name="Thanh V.N."/>
            <person name="Eijsink V.G.H."/>
            <person name="Larsbrink J."/>
            <person name="Olsson L."/>
        </authorList>
    </citation>
    <scope>NUCLEOTIDE SEQUENCE [GENOMIC DNA]</scope>
    <scope>FUNCTION</scope>
    <scope>CATALYTIC ACTIVITY</scope>
    <source>
        <strain>FCH 10.5</strain>
    </source>
</reference>
<reference key="2">
    <citation type="journal article" date="2017" name="Biotechnol. Biofuels">
        <title>Combined genome and transcriptome sequencing to investigate the plant cell wall degrading enzyme system in the thermophilic fungus Malbranchea cinnamomea.</title>
        <authorList>
            <person name="Huettner S."/>
            <person name="Nguyen T.T."/>
            <person name="Granchi Z."/>
            <person name="Chin-A-Woeng T."/>
            <person name="Ahren D."/>
            <person name="Larsbrink J."/>
            <person name="Thanh V.N."/>
            <person name="Olsson L."/>
        </authorList>
    </citation>
    <scope>INDUCTION</scope>
</reference>
<evidence type="ECO:0000250" key="1">
    <source>
        <dbReference type="UniProtKB" id="Q1K8B6"/>
    </source>
</evidence>
<evidence type="ECO:0000250" key="2">
    <source>
        <dbReference type="UniProtKB" id="Q7Z9M7"/>
    </source>
</evidence>
<evidence type="ECO:0000255" key="3"/>
<evidence type="ECO:0000269" key="4">
    <source>
    </source>
</evidence>
<evidence type="ECO:0000269" key="5">
    <source>
    </source>
</evidence>
<evidence type="ECO:0000303" key="6">
    <source>
    </source>
</evidence>
<evidence type="ECO:0000305" key="7"/>
<evidence type="ECO:0000305" key="8">
    <source>
    </source>
</evidence>
<comment type="function">
    <text evidence="5">Lytic polysaccharide monooxygenase (LPMO) that depolymerizes crystalline and amorphous polysaccharides via the oxidation of scissile alpha- or beta-(1-4)-glycosidic bonds, yielding C1 or C4 oxidation products (PubMed:31540984). Catalysis by LPMOs requires the reduction of the active-site copper from Cu(II) to Cu(I) by a reducing agent and H(2)O(2) or O(2) as a cosubstrate (PubMed:31540984). Active on hemicelluloses, including xylan, glucomannan, and xyloglucan (PubMed:31540984). Has no activity on ivory nut mannan (INM), a linear beta-1,4-linked mannan without substitutions (PubMed:31540984).</text>
</comment>
<comment type="catalytic activity">
    <reaction evidence="5">
        <text>[(1-&gt;4)-beta-D-glucosyl]n+m + reduced acceptor + O2 = 4-dehydro-beta-D-glucosyl-[(1-&gt;4)-beta-D-glucosyl]n-1 + [(1-&gt;4)-beta-D-glucosyl]m + acceptor + H2O.</text>
        <dbReference type="EC" id="1.14.99.56"/>
    </reaction>
</comment>
<comment type="cofactor">
    <cofactor evidence="1">
        <name>Cu(2+)</name>
        <dbReference type="ChEBI" id="CHEBI:29036"/>
    </cofactor>
    <text evidence="1">Binds 1 copper ion per subunit.</text>
</comment>
<comment type="subcellular location">
    <subcellularLocation>
        <location evidence="8">Secreted</location>
    </subcellularLocation>
</comment>
<comment type="induction">
    <text evidence="4">Expression is up-regulated during growth on wheat bran compared to that on glucose.</text>
</comment>
<comment type="biotechnology">
    <text evidence="2">Lignocellulose is the most abundant polymeric composite on Earth and is a recalcitrant but promising renewable substrate for industrial biotechnology applications. Together with cellobiose dehydrogenases (CDHs) an enzymatic system capable of oxidative cellulose cleavage is formed, which increases the efficiency of cellulases and put LPMOs at focus of biofuel research.</text>
</comment>
<comment type="similarity">
    <text evidence="7">Belongs to the polysaccharide monooxygenase AA9 family.</text>
</comment>
<protein>
    <recommendedName>
        <fullName evidence="6">AA9 family lytic polysaccharide monooxygenase B</fullName>
        <shortName evidence="6">AA9B</shortName>
        <shortName evidence="6">LPMO9B</shortName>
        <ecNumber evidence="5">1.14.99.56</ecNumber>
    </recommendedName>
    <alternativeName>
        <fullName evidence="7">Cellulase LPMO9B</fullName>
    </alternativeName>
    <alternativeName>
        <fullName evidence="7">Endo-beta-1,4-glucanase LPMO9CB</fullName>
        <shortName evidence="7">Endoglucanase LPMO9CB</shortName>
    </alternativeName>
    <alternativeName>
        <fullName evidence="7">Glycosyl hydrolase 61 family protein LPMO9CB</fullName>
    </alternativeName>
</protein>
<accession>A0A5J6BJT1</accession>
<dbReference type="EC" id="1.14.99.56" evidence="5"/>
<dbReference type="EMBL" id="MK135884">
    <property type="protein sequence ID" value="QDV60867.1"/>
    <property type="molecule type" value="Genomic_DNA"/>
</dbReference>
<dbReference type="SMR" id="A0A5J6BJT1"/>
<dbReference type="GO" id="GO:0005576">
    <property type="term" value="C:extracellular region"/>
    <property type="evidence" value="ECO:0007669"/>
    <property type="project" value="UniProtKB-SubCell"/>
</dbReference>
<dbReference type="GO" id="GO:0046872">
    <property type="term" value="F:metal ion binding"/>
    <property type="evidence" value="ECO:0007669"/>
    <property type="project" value="UniProtKB-KW"/>
</dbReference>
<dbReference type="GO" id="GO:0004497">
    <property type="term" value="F:monooxygenase activity"/>
    <property type="evidence" value="ECO:0007669"/>
    <property type="project" value="UniProtKB-KW"/>
</dbReference>
<dbReference type="GO" id="GO:0030245">
    <property type="term" value="P:cellulose catabolic process"/>
    <property type="evidence" value="ECO:0007669"/>
    <property type="project" value="UniProtKB-KW"/>
</dbReference>
<dbReference type="CDD" id="cd21175">
    <property type="entry name" value="LPMO_AA9"/>
    <property type="match status" value="1"/>
</dbReference>
<dbReference type="Gene3D" id="2.70.50.70">
    <property type="match status" value="1"/>
</dbReference>
<dbReference type="InterPro" id="IPR049892">
    <property type="entry name" value="AA9"/>
</dbReference>
<dbReference type="InterPro" id="IPR005103">
    <property type="entry name" value="AA9_LPMO"/>
</dbReference>
<dbReference type="PANTHER" id="PTHR33353:SF6">
    <property type="entry name" value="ENDOGLUCANASE IV"/>
    <property type="match status" value="1"/>
</dbReference>
<dbReference type="PANTHER" id="PTHR33353">
    <property type="entry name" value="PUTATIVE (AFU_ORTHOLOGUE AFUA_1G12560)-RELATED"/>
    <property type="match status" value="1"/>
</dbReference>
<dbReference type="Pfam" id="PF03443">
    <property type="entry name" value="AA9"/>
    <property type="match status" value="1"/>
</dbReference>
<feature type="signal peptide" evidence="3">
    <location>
        <begin position="1"/>
        <end position="18"/>
    </location>
</feature>
<feature type="chain" id="PRO_5023873740" description="AA9 family lytic polysaccharide monooxygenase B">
    <location>
        <begin position="19"/>
        <end position="245"/>
    </location>
</feature>
<feature type="binding site" evidence="2">
    <location>
        <position position="19"/>
    </location>
    <ligand>
        <name>Cu(2+)</name>
        <dbReference type="ChEBI" id="CHEBI:29036"/>
        <note>catalytic</note>
    </ligand>
</feature>
<feature type="binding site" evidence="2">
    <location>
        <position position="105"/>
    </location>
    <ligand>
        <name>Cu(2+)</name>
        <dbReference type="ChEBI" id="CHEBI:29036"/>
        <note>catalytic</note>
    </ligand>
</feature>
<feature type="binding site" evidence="1">
    <location>
        <position position="179"/>
    </location>
    <ligand>
        <name>O2</name>
        <dbReference type="ChEBI" id="CHEBI:15379"/>
    </ligand>
</feature>
<feature type="binding site" evidence="1">
    <location>
        <position position="188"/>
    </location>
    <ligand>
        <name>O2</name>
        <dbReference type="ChEBI" id="CHEBI:15379"/>
    </ligand>
</feature>
<feature type="binding site" evidence="2">
    <location>
        <position position="190"/>
    </location>
    <ligand>
        <name>Cu(2+)</name>
        <dbReference type="ChEBI" id="CHEBI:29036"/>
        <note>catalytic</note>
    </ligand>
</feature>
<feature type="disulfide bond" evidence="2">
    <location>
        <begin position="116"/>
        <end position="120"/>
    </location>
</feature>
<sequence>MKSAIFAAAVLGAAGVSAHGYVSKAILDGKEYTGYLPYEDPYHNPPPERIFRKIAGNGPIEDLTSIDLQCGGWQNSGSAPAPLTAEPVTPGTVQKLQWTTWPDSHKGPIITYMARCPGDCSEYEPGTDAVWFKIAEDGKHDDGSWASDPLINDVPYEFTIPEGLAPGNYIVRHELWALHAAWTYPGAQVYPSCFQVKVVGDGTQQPTNLVAFPGEYTPDTPGVVYDIYQNNEPYPIPGPPVWTPA</sequence>